<feature type="chain" id="PRO_0000199940" description="Sulfite reductase [NADPH] flavoprotein alpha-component">
    <location>
        <begin position="1"/>
        <end position="604"/>
    </location>
</feature>
<feature type="domain" description="Flavodoxin-like" evidence="1">
    <location>
        <begin position="68"/>
        <end position="206"/>
    </location>
</feature>
<feature type="domain" description="FAD-binding FR-type" evidence="1">
    <location>
        <begin position="239"/>
        <end position="453"/>
    </location>
</feature>
<feature type="binding site" evidence="1">
    <location>
        <begin position="74"/>
        <end position="79"/>
    </location>
    <ligand>
        <name>FMN</name>
        <dbReference type="ChEBI" id="CHEBI:58210"/>
    </ligand>
</feature>
<feature type="binding site" evidence="1">
    <location>
        <begin position="121"/>
        <end position="124"/>
    </location>
    <ligand>
        <name>FMN</name>
        <dbReference type="ChEBI" id="CHEBI:58210"/>
    </ligand>
</feature>
<feature type="binding site" evidence="1">
    <location>
        <begin position="157"/>
        <end position="166"/>
    </location>
    <ligand>
        <name>FMN</name>
        <dbReference type="ChEBI" id="CHEBI:58210"/>
    </ligand>
</feature>
<feature type="binding site" evidence="1">
    <location>
        <position position="327"/>
    </location>
    <ligand>
        <name>FAD</name>
        <dbReference type="ChEBI" id="CHEBI:57692"/>
    </ligand>
</feature>
<feature type="binding site" evidence="1">
    <location>
        <position position="361"/>
    </location>
    <ligand>
        <name>FAD</name>
        <dbReference type="ChEBI" id="CHEBI:57692"/>
    </ligand>
</feature>
<feature type="binding site" evidence="1">
    <location>
        <begin position="391"/>
        <end position="394"/>
    </location>
    <ligand>
        <name>FAD</name>
        <dbReference type="ChEBI" id="CHEBI:57692"/>
    </ligand>
</feature>
<feature type="binding site" evidence="1">
    <location>
        <begin position="409"/>
        <end position="411"/>
    </location>
    <ligand>
        <name>FAD</name>
        <dbReference type="ChEBI" id="CHEBI:57692"/>
    </ligand>
</feature>
<feature type="binding site" evidence="1">
    <location>
        <position position="415"/>
    </location>
    <ligand>
        <name>FAD</name>
        <dbReference type="ChEBI" id="CHEBI:57692"/>
    </ligand>
</feature>
<feature type="binding site" evidence="1">
    <location>
        <begin position="424"/>
        <end position="427"/>
    </location>
    <ligand>
        <name>FAD</name>
        <dbReference type="ChEBI" id="CHEBI:57692"/>
    </ligand>
</feature>
<feature type="binding site" evidence="1">
    <location>
        <begin position="524"/>
        <end position="525"/>
    </location>
    <ligand>
        <name>NADP(+)</name>
        <dbReference type="ChEBI" id="CHEBI:58349"/>
    </ligand>
</feature>
<feature type="binding site" evidence="1">
    <location>
        <begin position="530"/>
        <end position="534"/>
    </location>
    <ligand>
        <name>NADP(+)</name>
        <dbReference type="ChEBI" id="CHEBI:58349"/>
    </ligand>
</feature>
<feature type="binding site" evidence="1">
    <location>
        <position position="566"/>
    </location>
    <ligand>
        <name>NADP(+)</name>
        <dbReference type="ChEBI" id="CHEBI:58349"/>
    </ligand>
</feature>
<feature type="binding site" evidence="1">
    <location>
        <position position="604"/>
    </location>
    <ligand>
        <name>FAD</name>
        <dbReference type="ChEBI" id="CHEBI:57692"/>
    </ligand>
</feature>
<keyword id="KW-0028">Amino-acid biosynthesis</keyword>
<keyword id="KW-0198">Cysteine biosynthesis</keyword>
<keyword id="KW-0249">Electron transport</keyword>
<keyword id="KW-0274">FAD</keyword>
<keyword id="KW-0285">Flavoprotein</keyword>
<keyword id="KW-0288">FMN</keyword>
<keyword id="KW-0521">NADP</keyword>
<keyword id="KW-0560">Oxidoreductase</keyword>
<keyword id="KW-1185">Reference proteome</keyword>
<keyword id="KW-0813">Transport</keyword>
<name>CYSJ_ALIF1</name>
<accession>Q5E841</accession>
<protein>
    <recommendedName>
        <fullName evidence="1">Sulfite reductase [NADPH] flavoprotein alpha-component</fullName>
        <shortName evidence="1">SiR-FP</shortName>
        <ecNumber evidence="1">1.8.1.2</ecNumber>
    </recommendedName>
</protein>
<reference key="1">
    <citation type="journal article" date="2005" name="Proc. Natl. Acad. Sci. U.S.A.">
        <title>Complete genome sequence of Vibrio fischeri: a symbiotic bacterium with pathogenic congeners.</title>
        <authorList>
            <person name="Ruby E.G."/>
            <person name="Urbanowski M."/>
            <person name="Campbell J."/>
            <person name="Dunn A."/>
            <person name="Faini M."/>
            <person name="Gunsalus R."/>
            <person name="Lostroh P."/>
            <person name="Lupp C."/>
            <person name="McCann J."/>
            <person name="Millikan D."/>
            <person name="Schaefer A."/>
            <person name="Stabb E."/>
            <person name="Stevens A."/>
            <person name="Visick K."/>
            <person name="Whistler C."/>
            <person name="Greenberg E.P."/>
        </authorList>
    </citation>
    <scope>NUCLEOTIDE SEQUENCE [LARGE SCALE GENOMIC DNA]</scope>
    <source>
        <strain>ATCC 700601 / ES114</strain>
    </source>
</reference>
<comment type="function">
    <text evidence="1">Component of the sulfite reductase complex that catalyzes the 6-electron reduction of sulfite to sulfide. This is one of several activities required for the biosynthesis of L-cysteine from sulfate. The flavoprotein component catalyzes the electron flow from NADPH -&gt; FAD -&gt; FMN to the hemoprotein component.</text>
</comment>
<comment type="catalytic activity">
    <reaction evidence="1">
        <text>hydrogen sulfide + 3 NADP(+) + 3 H2O = sulfite + 3 NADPH + 4 H(+)</text>
        <dbReference type="Rhea" id="RHEA:13801"/>
        <dbReference type="ChEBI" id="CHEBI:15377"/>
        <dbReference type="ChEBI" id="CHEBI:15378"/>
        <dbReference type="ChEBI" id="CHEBI:17359"/>
        <dbReference type="ChEBI" id="CHEBI:29919"/>
        <dbReference type="ChEBI" id="CHEBI:57783"/>
        <dbReference type="ChEBI" id="CHEBI:58349"/>
        <dbReference type="EC" id="1.8.1.2"/>
    </reaction>
</comment>
<comment type="cofactor">
    <cofactor evidence="1">
        <name>FAD</name>
        <dbReference type="ChEBI" id="CHEBI:57692"/>
    </cofactor>
    <text evidence="1">Binds 1 FAD per subunit.</text>
</comment>
<comment type="cofactor">
    <cofactor evidence="1">
        <name>FMN</name>
        <dbReference type="ChEBI" id="CHEBI:58210"/>
    </cofactor>
    <text evidence="1">Binds 1 FMN per subunit.</text>
</comment>
<comment type="pathway">
    <text evidence="1">Sulfur metabolism; hydrogen sulfide biosynthesis; hydrogen sulfide from sulfite (NADPH route): step 1/1.</text>
</comment>
<comment type="subunit">
    <text evidence="1">Alpha(8)-beta(8). The alpha component is a flavoprotein, the beta component is a hemoprotein.</text>
</comment>
<comment type="similarity">
    <text evidence="1">Belongs to the NADPH-dependent sulphite reductase flavoprotein subunit CysJ family.</text>
</comment>
<comment type="similarity">
    <text evidence="1">In the N-terminal section; belongs to the flavodoxin family.</text>
</comment>
<comment type="similarity">
    <text evidence="1">In the C-terminal section; belongs to the flavoprotein pyridine nucleotide cytochrome reductase family.</text>
</comment>
<organism>
    <name type="scientific">Aliivibrio fischeri (strain ATCC 700601 / ES114)</name>
    <name type="common">Vibrio fischeri</name>
    <dbReference type="NCBI Taxonomy" id="312309"/>
    <lineage>
        <taxon>Bacteria</taxon>
        <taxon>Pseudomonadati</taxon>
        <taxon>Pseudomonadota</taxon>
        <taxon>Gammaproteobacteria</taxon>
        <taxon>Vibrionales</taxon>
        <taxon>Vibrionaceae</taxon>
        <taxon>Aliivibrio</taxon>
    </lineage>
</organism>
<proteinExistence type="inferred from homology"/>
<gene>
    <name evidence="1" type="primary">cysJ</name>
    <name type="ordered locus">VF_0310</name>
</gene>
<sequence>MLLKELSALASPLNDQQIGQLQQAASELSPQQLAWVSGYFWGISQTSGATQPINQAAAAVSSQPAGKLSIIFASQTGNAKGVAEALKEEAAAAGIAVELFDASDYKGKHLAKETHVIIVASTNGEGEAPDNAIELHEFLQSKKAPKLDNLHYGVIGLGDSSYEFFCQTGKDFDAFLSKQGATPFIERVDLDVDYEAPAAEWRKQALDKVKEALASEAQSAQVVQLPVGQAAHTSQYSKQNPYTATLLTSQKITGRDSGKDVRHIEIDLDGSGLTYQPGDALGVWFENSPELASAILKQVGLTGDEAVEVDGDSISLQKALVEKYEITSANPQLVTQYAELSGSKKLEKLAADKDKLRQYSGNTQVIDVLSEKKAKLTAEQLVGLLRRLTPRLYSIASSQSEVDEEVHLTVGVVEYLQGDETRFGGASSFLSHRLEEGDDVKVFVEHNNNFKLPQDDNAPVIMIGPGTGIAPFRSFVQERDNRDAEGKNWLFFGDRIFTQDFLYQVEWQKYLKSGIVNQLDVAFSRDQQEKVYVQHRILEHAAQVWQWLQDGAYIYVCGDATRMAKDVHEALICVVEQHGQKTREEAEQFVNELRKAKRYQRDVY</sequence>
<evidence type="ECO:0000255" key="1">
    <source>
        <dbReference type="HAMAP-Rule" id="MF_01541"/>
    </source>
</evidence>
<dbReference type="EC" id="1.8.1.2" evidence="1"/>
<dbReference type="EMBL" id="CP000020">
    <property type="protein sequence ID" value="AAW84805.1"/>
    <property type="molecule type" value="Genomic_DNA"/>
</dbReference>
<dbReference type="RefSeq" id="WP_011261116.1">
    <property type="nucleotide sequence ID" value="NC_006840.2"/>
</dbReference>
<dbReference type="RefSeq" id="YP_203693.1">
    <property type="nucleotide sequence ID" value="NC_006840.2"/>
</dbReference>
<dbReference type="SMR" id="Q5E841"/>
<dbReference type="STRING" id="312309.VF_0310"/>
<dbReference type="EnsemblBacteria" id="AAW84805">
    <property type="protein sequence ID" value="AAW84805"/>
    <property type="gene ID" value="VF_0310"/>
</dbReference>
<dbReference type="GeneID" id="54162929"/>
<dbReference type="KEGG" id="vfi:VF_0310"/>
<dbReference type="PATRIC" id="fig|312309.11.peg.303"/>
<dbReference type="eggNOG" id="COG0369">
    <property type="taxonomic scope" value="Bacteria"/>
</dbReference>
<dbReference type="HOGENOM" id="CLU_001570_17_7_6"/>
<dbReference type="OrthoDB" id="9816402at2"/>
<dbReference type="UniPathway" id="UPA00140">
    <property type="reaction ID" value="UER00207"/>
</dbReference>
<dbReference type="Proteomes" id="UP000000537">
    <property type="component" value="Chromosome I"/>
</dbReference>
<dbReference type="GO" id="GO:0005829">
    <property type="term" value="C:cytosol"/>
    <property type="evidence" value="ECO:0007669"/>
    <property type="project" value="TreeGrafter"/>
</dbReference>
<dbReference type="GO" id="GO:0050660">
    <property type="term" value="F:flavin adenine dinucleotide binding"/>
    <property type="evidence" value="ECO:0007669"/>
    <property type="project" value="InterPro"/>
</dbReference>
<dbReference type="GO" id="GO:0010181">
    <property type="term" value="F:FMN binding"/>
    <property type="evidence" value="ECO:0007669"/>
    <property type="project" value="InterPro"/>
</dbReference>
<dbReference type="GO" id="GO:0004783">
    <property type="term" value="F:sulfite reductase (NADPH) activity"/>
    <property type="evidence" value="ECO:0007669"/>
    <property type="project" value="UniProtKB-UniRule"/>
</dbReference>
<dbReference type="GO" id="GO:0019344">
    <property type="term" value="P:cysteine biosynthetic process"/>
    <property type="evidence" value="ECO:0007669"/>
    <property type="project" value="UniProtKB-KW"/>
</dbReference>
<dbReference type="GO" id="GO:0070814">
    <property type="term" value="P:hydrogen sulfide biosynthetic process"/>
    <property type="evidence" value="ECO:0007669"/>
    <property type="project" value="UniProtKB-UniRule"/>
</dbReference>
<dbReference type="GO" id="GO:0000103">
    <property type="term" value="P:sulfate assimilation"/>
    <property type="evidence" value="ECO:0007669"/>
    <property type="project" value="UniProtKB-UniRule"/>
</dbReference>
<dbReference type="CDD" id="cd06199">
    <property type="entry name" value="SiR"/>
    <property type="match status" value="1"/>
</dbReference>
<dbReference type="FunFam" id="3.40.50.80:FF:000001">
    <property type="entry name" value="NADPH--cytochrome P450 reductase 1"/>
    <property type="match status" value="1"/>
</dbReference>
<dbReference type="Gene3D" id="3.40.50.360">
    <property type="match status" value="1"/>
</dbReference>
<dbReference type="Gene3D" id="1.20.990.10">
    <property type="entry name" value="NADPH-cytochrome p450 Reductase, Chain A, domain 3"/>
    <property type="match status" value="1"/>
</dbReference>
<dbReference type="Gene3D" id="3.40.50.80">
    <property type="entry name" value="Nucleotide-binding domain of ferredoxin-NADP reductase (FNR) module"/>
    <property type="match status" value="1"/>
</dbReference>
<dbReference type="Gene3D" id="2.40.30.10">
    <property type="entry name" value="Translation factors"/>
    <property type="match status" value="1"/>
</dbReference>
<dbReference type="HAMAP" id="MF_01541">
    <property type="entry name" value="CysJ"/>
    <property type="match status" value="1"/>
</dbReference>
<dbReference type="InterPro" id="IPR010199">
    <property type="entry name" value="CysJ"/>
</dbReference>
<dbReference type="InterPro" id="IPR003097">
    <property type="entry name" value="CysJ-like_FAD-binding"/>
</dbReference>
<dbReference type="InterPro" id="IPR029758">
    <property type="entry name" value="CysJ_Proteobact"/>
</dbReference>
<dbReference type="InterPro" id="IPR017927">
    <property type="entry name" value="FAD-bd_FR_type"/>
</dbReference>
<dbReference type="InterPro" id="IPR001094">
    <property type="entry name" value="Flavdoxin-like"/>
</dbReference>
<dbReference type="InterPro" id="IPR008254">
    <property type="entry name" value="Flavodoxin/NO_synth"/>
</dbReference>
<dbReference type="InterPro" id="IPR001709">
    <property type="entry name" value="Flavoprot_Pyr_Nucl_cyt_Rdtase"/>
</dbReference>
<dbReference type="InterPro" id="IPR029039">
    <property type="entry name" value="Flavoprotein-like_sf"/>
</dbReference>
<dbReference type="InterPro" id="IPR039261">
    <property type="entry name" value="FNR_nucleotide-bd"/>
</dbReference>
<dbReference type="InterPro" id="IPR023173">
    <property type="entry name" value="NADPH_Cyt_P450_Rdtase_alpha"/>
</dbReference>
<dbReference type="InterPro" id="IPR001433">
    <property type="entry name" value="OxRdtase_FAD/NAD-bd"/>
</dbReference>
<dbReference type="InterPro" id="IPR017938">
    <property type="entry name" value="Riboflavin_synthase-like_b-brl"/>
</dbReference>
<dbReference type="NCBIfam" id="TIGR01931">
    <property type="entry name" value="cysJ"/>
    <property type="match status" value="1"/>
</dbReference>
<dbReference type="NCBIfam" id="NF004859">
    <property type="entry name" value="PRK06214.1"/>
    <property type="match status" value="1"/>
</dbReference>
<dbReference type="PANTHER" id="PTHR19384:SF128">
    <property type="entry name" value="NADPH OXIDOREDUCTASE A"/>
    <property type="match status" value="1"/>
</dbReference>
<dbReference type="PANTHER" id="PTHR19384">
    <property type="entry name" value="NITRIC OXIDE SYNTHASE-RELATED"/>
    <property type="match status" value="1"/>
</dbReference>
<dbReference type="Pfam" id="PF00667">
    <property type="entry name" value="FAD_binding_1"/>
    <property type="match status" value="1"/>
</dbReference>
<dbReference type="Pfam" id="PF00258">
    <property type="entry name" value="Flavodoxin_1"/>
    <property type="match status" value="1"/>
</dbReference>
<dbReference type="Pfam" id="PF00175">
    <property type="entry name" value="NAD_binding_1"/>
    <property type="match status" value="1"/>
</dbReference>
<dbReference type="PIRSF" id="PIRSF000207">
    <property type="entry name" value="SiR-FP_CysJ"/>
    <property type="match status" value="1"/>
</dbReference>
<dbReference type="PRINTS" id="PR00369">
    <property type="entry name" value="FLAVODOXIN"/>
</dbReference>
<dbReference type="PRINTS" id="PR00371">
    <property type="entry name" value="FPNCR"/>
</dbReference>
<dbReference type="SUPFAM" id="SSF52343">
    <property type="entry name" value="Ferredoxin reductase-like, C-terminal NADP-linked domain"/>
    <property type="match status" value="1"/>
</dbReference>
<dbReference type="SUPFAM" id="SSF52218">
    <property type="entry name" value="Flavoproteins"/>
    <property type="match status" value="1"/>
</dbReference>
<dbReference type="SUPFAM" id="SSF63380">
    <property type="entry name" value="Riboflavin synthase domain-like"/>
    <property type="match status" value="1"/>
</dbReference>
<dbReference type="PROSITE" id="PS51384">
    <property type="entry name" value="FAD_FR"/>
    <property type="match status" value="1"/>
</dbReference>
<dbReference type="PROSITE" id="PS50902">
    <property type="entry name" value="FLAVODOXIN_LIKE"/>
    <property type="match status" value="1"/>
</dbReference>